<feature type="chain" id="PRO_1000187598" description="Tyrosine recombinase XerC">
    <location>
        <begin position="1"/>
        <end position="298"/>
    </location>
</feature>
<feature type="domain" description="Core-binding (CB)" evidence="3">
    <location>
        <begin position="2"/>
        <end position="88"/>
    </location>
</feature>
<feature type="domain" description="Tyr recombinase" evidence="2">
    <location>
        <begin position="109"/>
        <end position="288"/>
    </location>
</feature>
<feature type="active site" evidence="1">
    <location>
        <position position="148"/>
    </location>
</feature>
<feature type="active site" evidence="1">
    <location>
        <position position="172"/>
    </location>
</feature>
<feature type="active site" evidence="1">
    <location>
        <position position="240"/>
    </location>
</feature>
<feature type="active site" evidence="1">
    <location>
        <position position="243"/>
    </location>
</feature>
<feature type="active site" evidence="1">
    <location>
        <position position="266"/>
    </location>
</feature>
<feature type="active site" description="O-(3'-phospho-DNA)-tyrosine intermediate" evidence="1">
    <location>
        <position position="275"/>
    </location>
</feature>
<gene>
    <name evidence="1" type="primary">xerC</name>
    <name type="ordered locus">EFER_3691</name>
</gene>
<accession>B7LU45</accession>
<organism>
    <name type="scientific">Escherichia fergusonii (strain ATCC 35469 / DSM 13698 / CCUG 18766 / IAM 14443 / JCM 21226 / LMG 7866 / NBRC 102419 / NCTC 12128 / CDC 0568-73)</name>
    <dbReference type="NCBI Taxonomy" id="585054"/>
    <lineage>
        <taxon>Bacteria</taxon>
        <taxon>Pseudomonadati</taxon>
        <taxon>Pseudomonadota</taxon>
        <taxon>Gammaproteobacteria</taxon>
        <taxon>Enterobacterales</taxon>
        <taxon>Enterobacteriaceae</taxon>
        <taxon>Escherichia</taxon>
    </lineage>
</organism>
<proteinExistence type="inferred from homology"/>
<sequence length="298" mass="33868">MTDLHTDVERYLRYLSVERQLSPITLLNYQRQLEAIINFASENGLQSWQQCDVTMVRNFAVRSRRKGLGAASLALRLSALRSFFDWLVSQNELKANPAKGVSAPKAPRHLPKNIDVDDMNRLLDIDINDPLAVRDRAMLEVMYGAGLRLSELVGLDIKHLDLESGEVWVMGKGSKERRLPIGRNAVAWIEHWLDLRDLFGSEDDALFLSKLGKRISARNVQKRFAEWGIKQGLNNHVHPHKLRHSFATHMLESSGDLRGVQELLGHANLSTTQIYTHLDFQHLASVYDAAHPRAKRGK</sequence>
<dbReference type="EMBL" id="CU928158">
    <property type="protein sequence ID" value="CAQ91153.1"/>
    <property type="molecule type" value="Genomic_DNA"/>
</dbReference>
<dbReference type="RefSeq" id="WP_000130691.1">
    <property type="nucleotide sequence ID" value="NC_011740.1"/>
</dbReference>
<dbReference type="SMR" id="B7LU45"/>
<dbReference type="GeneID" id="75059707"/>
<dbReference type="KEGG" id="efe:EFER_3691"/>
<dbReference type="HOGENOM" id="CLU_027562_9_0_6"/>
<dbReference type="OrthoDB" id="9801717at2"/>
<dbReference type="Proteomes" id="UP000000745">
    <property type="component" value="Chromosome"/>
</dbReference>
<dbReference type="GO" id="GO:0005737">
    <property type="term" value="C:cytoplasm"/>
    <property type="evidence" value="ECO:0007669"/>
    <property type="project" value="UniProtKB-SubCell"/>
</dbReference>
<dbReference type="GO" id="GO:0003677">
    <property type="term" value="F:DNA binding"/>
    <property type="evidence" value="ECO:0007669"/>
    <property type="project" value="UniProtKB-KW"/>
</dbReference>
<dbReference type="GO" id="GO:0009037">
    <property type="term" value="F:tyrosine-based site-specific recombinase activity"/>
    <property type="evidence" value="ECO:0007669"/>
    <property type="project" value="UniProtKB-UniRule"/>
</dbReference>
<dbReference type="GO" id="GO:0051301">
    <property type="term" value="P:cell division"/>
    <property type="evidence" value="ECO:0007669"/>
    <property type="project" value="UniProtKB-KW"/>
</dbReference>
<dbReference type="GO" id="GO:0007059">
    <property type="term" value="P:chromosome segregation"/>
    <property type="evidence" value="ECO:0007669"/>
    <property type="project" value="UniProtKB-UniRule"/>
</dbReference>
<dbReference type="GO" id="GO:0006313">
    <property type="term" value="P:DNA transposition"/>
    <property type="evidence" value="ECO:0007669"/>
    <property type="project" value="UniProtKB-UniRule"/>
</dbReference>
<dbReference type="CDD" id="cd00798">
    <property type="entry name" value="INT_XerDC_C"/>
    <property type="match status" value="1"/>
</dbReference>
<dbReference type="FunFam" id="1.10.443.10:FF:000002">
    <property type="entry name" value="Tyrosine recombinase XerC"/>
    <property type="match status" value="1"/>
</dbReference>
<dbReference type="Gene3D" id="1.10.150.130">
    <property type="match status" value="1"/>
</dbReference>
<dbReference type="Gene3D" id="1.10.443.10">
    <property type="entry name" value="Intergrase catalytic core"/>
    <property type="match status" value="1"/>
</dbReference>
<dbReference type="HAMAP" id="MF_01808">
    <property type="entry name" value="Recomb_XerC_XerD"/>
    <property type="match status" value="1"/>
</dbReference>
<dbReference type="InterPro" id="IPR044068">
    <property type="entry name" value="CB"/>
</dbReference>
<dbReference type="InterPro" id="IPR011010">
    <property type="entry name" value="DNA_brk_join_enz"/>
</dbReference>
<dbReference type="InterPro" id="IPR013762">
    <property type="entry name" value="Integrase-like_cat_sf"/>
</dbReference>
<dbReference type="InterPro" id="IPR002104">
    <property type="entry name" value="Integrase_catalytic"/>
</dbReference>
<dbReference type="InterPro" id="IPR010998">
    <property type="entry name" value="Integrase_recombinase_N"/>
</dbReference>
<dbReference type="InterPro" id="IPR004107">
    <property type="entry name" value="Integrase_SAM-like_N"/>
</dbReference>
<dbReference type="InterPro" id="IPR011931">
    <property type="entry name" value="Recomb_XerC"/>
</dbReference>
<dbReference type="InterPro" id="IPR023009">
    <property type="entry name" value="Tyrosine_recombinase_XerC/XerD"/>
</dbReference>
<dbReference type="InterPro" id="IPR050090">
    <property type="entry name" value="Tyrosine_recombinase_XerCD"/>
</dbReference>
<dbReference type="NCBIfam" id="NF001399">
    <property type="entry name" value="PRK00283.1"/>
    <property type="match status" value="1"/>
</dbReference>
<dbReference type="NCBIfam" id="TIGR02224">
    <property type="entry name" value="recomb_XerC"/>
    <property type="match status" value="1"/>
</dbReference>
<dbReference type="PANTHER" id="PTHR30349">
    <property type="entry name" value="PHAGE INTEGRASE-RELATED"/>
    <property type="match status" value="1"/>
</dbReference>
<dbReference type="PANTHER" id="PTHR30349:SF81">
    <property type="entry name" value="TYROSINE RECOMBINASE XERC"/>
    <property type="match status" value="1"/>
</dbReference>
<dbReference type="Pfam" id="PF02899">
    <property type="entry name" value="Phage_int_SAM_1"/>
    <property type="match status" value="1"/>
</dbReference>
<dbReference type="Pfam" id="PF00589">
    <property type="entry name" value="Phage_integrase"/>
    <property type="match status" value="1"/>
</dbReference>
<dbReference type="SUPFAM" id="SSF56349">
    <property type="entry name" value="DNA breaking-rejoining enzymes"/>
    <property type="match status" value="1"/>
</dbReference>
<dbReference type="SUPFAM" id="SSF47823">
    <property type="entry name" value="lambda integrase-like, N-terminal domain"/>
    <property type="match status" value="1"/>
</dbReference>
<dbReference type="PROSITE" id="PS51900">
    <property type="entry name" value="CB"/>
    <property type="match status" value="1"/>
</dbReference>
<dbReference type="PROSITE" id="PS51898">
    <property type="entry name" value="TYR_RECOMBINASE"/>
    <property type="match status" value="1"/>
</dbReference>
<comment type="function">
    <text evidence="1">Site-specific tyrosine recombinase, which acts by catalyzing the cutting and rejoining of the recombining DNA molecules. Binds cooperatively to specific DNA consensus sequences that are separated from XerD binding sites by a short central region, forming the heterotetrameric XerC-XerD complex that recombines DNA substrates. The complex is essential to convert dimers of the bacterial chromosome into monomers to permit their segregation at cell division. It also contributes to the segregational stability of plasmids. In the complex XerC specifically exchanges the top DNA strands.</text>
</comment>
<comment type="activity regulation">
    <text evidence="1">FtsK may regulate the catalytic switch between XerC and XerD in the heterotetrameric complex during the two steps of the recombination process.</text>
</comment>
<comment type="subunit">
    <text evidence="1">Forms a cyclic heterotetrameric complex composed of two molecules of XerC and two molecules of XerD, in which XerC interacts with XerD via its C-terminal region, XerD interacts with XerC via its C-terminal region and so on.</text>
</comment>
<comment type="subcellular location">
    <subcellularLocation>
        <location evidence="1">Cytoplasm</location>
    </subcellularLocation>
</comment>
<comment type="similarity">
    <text evidence="1">Belongs to the 'phage' integrase family. XerC subfamily.</text>
</comment>
<keyword id="KW-0131">Cell cycle</keyword>
<keyword id="KW-0132">Cell division</keyword>
<keyword id="KW-0159">Chromosome partition</keyword>
<keyword id="KW-0963">Cytoplasm</keyword>
<keyword id="KW-0229">DNA integration</keyword>
<keyword id="KW-0233">DNA recombination</keyword>
<keyword id="KW-0238">DNA-binding</keyword>
<reference key="1">
    <citation type="journal article" date="2009" name="PLoS Genet.">
        <title>Organised genome dynamics in the Escherichia coli species results in highly diverse adaptive paths.</title>
        <authorList>
            <person name="Touchon M."/>
            <person name="Hoede C."/>
            <person name="Tenaillon O."/>
            <person name="Barbe V."/>
            <person name="Baeriswyl S."/>
            <person name="Bidet P."/>
            <person name="Bingen E."/>
            <person name="Bonacorsi S."/>
            <person name="Bouchier C."/>
            <person name="Bouvet O."/>
            <person name="Calteau A."/>
            <person name="Chiapello H."/>
            <person name="Clermont O."/>
            <person name="Cruveiller S."/>
            <person name="Danchin A."/>
            <person name="Diard M."/>
            <person name="Dossat C."/>
            <person name="Karoui M.E."/>
            <person name="Frapy E."/>
            <person name="Garry L."/>
            <person name="Ghigo J.M."/>
            <person name="Gilles A.M."/>
            <person name="Johnson J."/>
            <person name="Le Bouguenec C."/>
            <person name="Lescat M."/>
            <person name="Mangenot S."/>
            <person name="Martinez-Jehanne V."/>
            <person name="Matic I."/>
            <person name="Nassif X."/>
            <person name="Oztas S."/>
            <person name="Petit M.A."/>
            <person name="Pichon C."/>
            <person name="Rouy Z."/>
            <person name="Ruf C.S."/>
            <person name="Schneider D."/>
            <person name="Tourret J."/>
            <person name="Vacherie B."/>
            <person name="Vallenet D."/>
            <person name="Medigue C."/>
            <person name="Rocha E.P.C."/>
            <person name="Denamur E."/>
        </authorList>
    </citation>
    <scope>NUCLEOTIDE SEQUENCE [LARGE SCALE GENOMIC DNA]</scope>
    <source>
        <strain>ATCC 35469 / DSM 13698 / BCRC 15582 / CCUG 18766 / IAM 14443 / JCM 21226 / LMG 7866 / NBRC 102419 / NCTC 12128 / CDC 0568-73</strain>
    </source>
</reference>
<protein>
    <recommendedName>
        <fullName evidence="1">Tyrosine recombinase XerC</fullName>
    </recommendedName>
</protein>
<name>XERC_ESCF3</name>
<evidence type="ECO:0000255" key="1">
    <source>
        <dbReference type="HAMAP-Rule" id="MF_01808"/>
    </source>
</evidence>
<evidence type="ECO:0000255" key="2">
    <source>
        <dbReference type="PROSITE-ProRule" id="PRU01246"/>
    </source>
</evidence>
<evidence type="ECO:0000255" key="3">
    <source>
        <dbReference type="PROSITE-ProRule" id="PRU01248"/>
    </source>
</evidence>